<comment type="function">
    <text evidence="1">DNA ligase that catalyzes the formation of phosphodiester linkages between 5'-phosphoryl and 3'-hydroxyl groups in double-stranded DNA using NAD as a coenzyme and as the energy source for the reaction. It is essential for DNA replication and repair of damaged DNA.</text>
</comment>
<comment type="catalytic activity">
    <reaction evidence="1">
        <text>NAD(+) + (deoxyribonucleotide)n-3'-hydroxyl + 5'-phospho-(deoxyribonucleotide)m = (deoxyribonucleotide)n+m + AMP + beta-nicotinamide D-nucleotide.</text>
        <dbReference type="EC" id="6.5.1.2"/>
    </reaction>
</comment>
<comment type="cofactor">
    <cofactor evidence="1">
        <name>Mg(2+)</name>
        <dbReference type="ChEBI" id="CHEBI:18420"/>
    </cofactor>
    <cofactor evidence="1">
        <name>Mn(2+)</name>
        <dbReference type="ChEBI" id="CHEBI:29035"/>
    </cofactor>
</comment>
<comment type="similarity">
    <text evidence="1">Belongs to the NAD-dependent DNA ligase family. LigA subfamily.</text>
</comment>
<dbReference type="EC" id="6.5.1.2" evidence="1"/>
<dbReference type="EMBL" id="CP000572">
    <property type="protein sequence ID" value="ABN91088.1"/>
    <property type="molecule type" value="Genomic_DNA"/>
</dbReference>
<dbReference type="RefSeq" id="WP_004521185.1">
    <property type="nucleotide sequence ID" value="NC_009076.1"/>
</dbReference>
<dbReference type="SMR" id="A3NWN7"/>
<dbReference type="GeneID" id="93060705"/>
<dbReference type="KEGG" id="bpl:BURPS1106A_2499"/>
<dbReference type="HOGENOM" id="CLU_007764_2_1_4"/>
<dbReference type="Proteomes" id="UP000006738">
    <property type="component" value="Chromosome I"/>
</dbReference>
<dbReference type="GO" id="GO:0005829">
    <property type="term" value="C:cytosol"/>
    <property type="evidence" value="ECO:0007669"/>
    <property type="project" value="TreeGrafter"/>
</dbReference>
<dbReference type="GO" id="GO:0003677">
    <property type="term" value="F:DNA binding"/>
    <property type="evidence" value="ECO:0007669"/>
    <property type="project" value="InterPro"/>
</dbReference>
<dbReference type="GO" id="GO:0003911">
    <property type="term" value="F:DNA ligase (NAD+) activity"/>
    <property type="evidence" value="ECO:0007669"/>
    <property type="project" value="UniProtKB-UniRule"/>
</dbReference>
<dbReference type="GO" id="GO:0046872">
    <property type="term" value="F:metal ion binding"/>
    <property type="evidence" value="ECO:0007669"/>
    <property type="project" value="UniProtKB-KW"/>
</dbReference>
<dbReference type="GO" id="GO:0006281">
    <property type="term" value="P:DNA repair"/>
    <property type="evidence" value="ECO:0007669"/>
    <property type="project" value="UniProtKB-KW"/>
</dbReference>
<dbReference type="GO" id="GO:0006260">
    <property type="term" value="P:DNA replication"/>
    <property type="evidence" value="ECO:0007669"/>
    <property type="project" value="UniProtKB-KW"/>
</dbReference>
<dbReference type="CDD" id="cd17748">
    <property type="entry name" value="BRCT_DNA_ligase_like"/>
    <property type="match status" value="1"/>
</dbReference>
<dbReference type="CDD" id="cd00114">
    <property type="entry name" value="LIGANc"/>
    <property type="match status" value="1"/>
</dbReference>
<dbReference type="FunFam" id="1.10.150.20:FF:000006">
    <property type="entry name" value="DNA ligase"/>
    <property type="match status" value="1"/>
</dbReference>
<dbReference type="FunFam" id="1.10.150.20:FF:000007">
    <property type="entry name" value="DNA ligase"/>
    <property type="match status" value="1"/>
</dbReference>
<dbReference type="FunFam" id="1.10.287.610:FF:000002">
    <property type="entry name" value="DNA ligase"/>
    <property type="match status" value="1"/>
</dbReference>
<dbReference type="FunFam" id="2.40.50.140:FF:000012">
    <property type="entry name" value="DNA ligase"/>
    <property type="match status" value="1"/>
</dbReference>
<dbReference type="FunFam" id="3.30.470.30:FF:000001">
    <property type="entry name" value="DNA ligase"/>
    <property type="match status" value="1"/>
</dbReference>
<dbReference type="FunFam" id="3.40.50.10190:FF:000054">
    <property type="entry name" value="DNA ligase"/>
    <property type="match status" value="1"/>
</dbReference>
<dbReference type="Gene3D" id="6.20.10.30">
    <property type="match status" value="1"/>
</dbReference>
<dbReference type="Gene3D" id="1.10.150.20">
    <property type="entry name" value="5' to 3' exonuclease, C-terminal subdomain"/>
    <property type="match status" value="2"/>
</dbReference>
<dbReference type="Gene3D" id="3.40.50.10190">
    <property type="entry name" value="BRCT domain"/>
    <property type="match status" value="1"/>
</dbReference>
<dbReference type="Gene3D" id="3.30.470.30">
    <property type="entry name" value="DNA ligase/mRNA capping enzyme"/>
    <property type="match status" value="1"/>
</dbReference>
<dbReference type="Gene3D" id="1.10.287.610">
    <property type="entry name" value="Helix hairpin bin"/>
    <property type="match status" value="1"/>
</dbReference>
<dbReference type="Gene3D" id="2.40.50.140">
    <property type="entry name" value="Nucleic acid-binding proteins"/>
    <property type="match status" value="1"/>
</dbReference>
<dbReference type="HAMAP" id="MF_01588">
    <property type="entry name" value="DNA_ligase_A"/>
    <property type="match status" value="1"/>
</dbReference>
<dbReference type="InterPro" id="IPR001357">
    <property type="entry name" value="BRCT_dom"/>
</dbReference>
<dbReference type="InterPro" id="IPR036420">
    <property type="entry name" value="BRCT_dom_sf"/>
</dbReference>
<dbReference type="InterPro" id="IPR041663">
    <property type="entry name" value="DisA/LigA_HHH"/>
</dbReference>
<dbReference type="InterPro" id="IPR001679">
    <property type="entry name" value="DNA_ligase"/>
</dbReference>
<dbReference type="InterPro" id="IPR018239">
    <property type="entry name" value="DNA_ligase_AS"/>
</dbReference>
<dbReference type="InterPro" id="IPR033136">
    <property type="entry name" value="DNA_ligase_CS"/>
</dbReference>
<dbReference type="InterPro" id="IPR013839">
    <property type="entry name" value="DNAligase_adenylation"/>
</dbReference>
<dbReference type="InterPro" id="IPR013840">
    <property type="entry name" value="DNAligase_N"/>
</dbReference>
<dbReference type="InterPro" id="IPR003583">
    <property type="entry name" value="Hlx-hairpin-Hlx_DNA-bd_motif"/>
</dbReference>
<dbReference type="InterPro" id="IPR012340">
    <property type="entry name" value="NA-bd_OB-fold"/>
</dbReference>
<dbReference type="InterPro" id="IPR004150">
    <property type="entry name" value="NAD_DNA_ligase_OB"/>
</dbReference>
<dbReference type="InterPro" id="IPR010994">
    <property type="entry name" value="RuvA_2-like"/>
</dbReference>
<dbReference type="InterPro" id="IPR004149">
    <property type="entry name" value="Znf_DNAligase_C4"/>
</dbReference>
<dbReference type="NCBIfam" id="TIGR00575">
    <property type="entry name" value="dnlj"/>
    <property type="match status" value="1"/>
</dbReference>
<dbReference type="NCBIfam" id="NF005932">
    <property type="entry name" value="PRK07956.1"/>
    <property type="match status" value="1"/>
</dbReference>
<dbReference type="PANTHER" id="PTHR23389">
    <property type="entry name" value="CHROMOSOME TRANSMISSION FIDELITY FACTOR 18"/>
    <property type="match status" value="1"/>
</dbReference>
<dbReference type="PANTHER" id="PTHR23389:SF9">
    <property type="entry name" value="DNA LIGASE"/>
    <property type="match status" value="1"/>
</dbReference>
<dbReference type="Pfam" id="PF00533">
    <property type="entry name" value="BRCT"/>
    <property type="match status" value="1"/>
</dbReference>
<dbReference type="Pfam" id="PF01653">
    <property type="entry name" value="DNA_ligase_aden"/>
    <property type="match status" value="1"/>
</dbReference>
<dbReference type="Pfam" id="PF03120">
    <property type="entry name" value="DNA_ligase_OB"/>
    <property type="match status" value="1"/>
</dbReference>
<dbReference type="Pfam" id="PF03119">
    <property type="entry name" value="DNA_ligase_ZBD"/>
    <property type="match status" value="1"/>
</dbReference>
<dbReference type="Pfam" id="PF12826">
    <property type="entry name" value="HHH_2"/>
    <property type="match status" value="1"/>
</dbReference>
<dbReference type="Pfam" id="PF14520">
    <property type="entry name" value="HHH_5"/>
    <property type="match status" value="1"/>
</dbReference>
<dbReference type="Pfam" id="PF22745">
    <property type="entry name" value="Nlig-Ia"/>
    <property type="match status" value="1"/>
</dbReference>
<dbReference type="PIRSF" id="PIRSF001604">
    <property type="entry name" value="LigA"/>
    <property type="match status" value="1"/>
</dbReference>
<dbReference type="SMART" id="SM00292">
    <property type="entry name" value="BRCT"/>
    <property type="match status" value="1"/>
</dbReference>
<dbReference type="SMART" id="SM00278">
    <property type="entry name" value="HhH1"/>
    <property type="match status" value="4"/>
</dbReference>
<dbReference type="SMART" id="SM00532">
    <property type="entry name" value="LIGANc"/>
    <property type="match status" value="1"/>
</dbReference>
<dbReference type="SUPFAM" id="SSF52113">
    <property type="entry name" value="BRCT domain"/>
    <property type="match status" value="1"/>
</dbReference>
<dbReference type="SUPFAM" id="SSF56091">
    <property type="entry name" value="DNA ligase/mRNA capping enzyme, catalytic domain"/>
    <property type="match status" value="1"/>
</dbReference>
<dbReference type="SUPFAM" id="SSF50249">
    <property type="entry name" value="Nucleic acid-binding proteins"/>
    <property type="match status" value="1"/>
</dbReference>
<dbReference type="SUPFAM" id="SSF47781">
    <property type="entry name" value="RuvA domain 2-like"/>
    <property type="match status" value="1"/>
</dbReference>
<dbReference type="PROSITE" id="PS50172">
    <property type="entry name" value="BRCT"/>
    <property type="match status" value="1"/>
</dbReference>
<dbReference type="PROSITE" id="PS01055">
    <property type="entry name" value="DNA_LIGASE_N1"/>
    <property type="match status" value="1"/>
</dbReference>
<dbReference type="PROSITE" id="PS01056">
    <property type="entry name" value="DNA_LIGASE_N2"/>
    <property type="match status" value="1"/>
</dbReference>
<accession>A3NWN7</accession>
<gene>
    <name evidence="1" type="primary">ligA</name>
    <name type="ordered locus">BURPS1106A_2499</name>
</gene>
<protein>
    <recommendedName>
        <fullName evidence="1">DNA ligase</fullName>
        <ecNumber evidence="1">6.5.1.2</ecNumber>
    </recommendedName>
    <alternativeName>
        <fullName evidence="1">Polydeoxyribonucleotide synthase [NAD(+)]</fullName>
    </alternativeName>
</protein>
<sequence length="691" mass="75596">MARSPVEPPASQPAKRAAWLRAELERANYAYYVLDQPDLPDAEYDRLFVELQRIEAEHPDLVTPDSPTQRVGGEAASGFTPVVHDKPMLSLNNGFADEDVIAFDKRVADGLDKATDLAGTVTEPVEYACELKFDGLAISLRYENGRFVQASTRGDGTTGEDVTENIRTIRAIPLTLKGKRIPRMLDVRGEVLMFKRDFARLNERQRAAGQREFANPRNAAAGSLRQLDSKITASRPLSFFAYGIGVLDGADMPDTHSGLLDWYETLGLPVNRERAVVRGAAGLLAFFHSVGERRESLPYDIDGVVYKVNRRDEQDRLGFVSRAPRFALAHKFPAQEALTKLIAIDVQVGRTGAITPVARLEPVFVGGATVTNATLHNEDEVRRKDIRIGDTVIVRRAGDVIPEVVSAVLDRRPADAQEFVMPTECPECGSRIERLPDEAIARCTGGLFCPAQRKQALWHFAQRRALDIDGLGEKIIDQLVEQNLVRTPADLFNLGFSTLVALDRFAEKSARNLIDSLEKAKHTTLARFIYALGIRHVGESTAKDLAKHFGSLDPIMDAPIDALLEVNDVGPIVAESIHQFFAEEHNRTVIEQLRARGKVTWPEGPPAPRAPQGVLAGKTVVLTGTLPTLTREAAKEMLEAAGAKVAGSVSKKTDYVVAGADAGSKLAKAEELGIPVLDEAGMHTLLEGHAR</sequence>
<evidence type="ECO:0000255" key="1">
    <source>
        <dbReference type="HAMAP-Rule" id="MF_01588"/>
    </source>
</evidence>
<reference key="1">
    <citation type="journal article" date="2010" name="Genome Biol. Evol.">
        <title>Continuing evolution of Burkholderia mallei through genome reduction and large-scale rearrangements.</title>
        <authorList>
            <person name="Losada L."/>
            <person name="Ronning C.M."/>
            <person name="DeShazer D."/>
            <person name="Woods D."/>
            <person name="Fedorova N."/>
            <person name="Kim H.S."/>
            <person name="Shabalina S.A."/>
            <person name="Pearson T.R."/>
            <person name="Brinkac L."/>
            <person name="Tan P."/>
            <person name="Nandi T."/>
            <person name="Crabtree J."/>
            <person name="Badger J."/>
            <person name="Beckstrom-Sternberg S."/>
            <person name="Saqib M."/>
            <person name="Schutzer S.E."/>
            <person name="Keim P."/>
            <person name="Nierman W.C."/>
        </authorList>
    </citation>
    <scope>NUCLEOTIDE SEQUENCE [LARGE SCALE GENOMIC DNA]</scope>
    <source>
        <strain>1106a</strain>
    </source>
</reference>
<organism>
    <name type="scientific">Burkholderia pseudomallei (strain 1106a)</name>
    <dbReference type="NCBI Taxonomy" id="357348"/>
    <lineage>
        <taxon>Bacteria</taxon>
        <taxon>Pseudomonadati</taxon>
        <taxon>Pseudomonadota</taxon>
        <taxon>Betaproteobacteria</taxon>
        <taxon>Burkholderiales</taxon>
        <taxon>Burkholderiaceae</taxon>
        <taxon>Burkholderia</taxon>
        <taxon>pseudomallei group</taxon>
    </lineage>
</organism>
<name>DNLJ_BURP0</name>
<keyword id="KW-0227">DNA damage</keyword>
<keyword id="KW-0234">DNA repair</keyword>
<keyword id="KW-0235">DNA replication</keyword>
<keyword id="KW-0436">Ligase</keyword>
<keyword id="KW-0460">Magnesium</keyword>
<keyword id="KW-0464">Manganese</keyword>
<keyword id="KW-0479">Metal-binding</keyword>
<keyword id="KW-0520">NAD</keyword>
<keyword id="KW-0862">Zinc</keyword>
<proteinExistence type="inferred from homology"/>
<feature type="chain" id="PRO_0000313166" description="DNA ligase">
    <location>
        <begin position="1"/>
        <end position="691"/>
    </location>
</feature>
<feature type="domain" description="BRCT" evidence="1">
    <location>
        <begin position="610"/>
        <end position="691"/>
    </location>
</feature>
<feature type="active site" description="N6-AMP-lysine intermediate" evidence="1">
    <location>
        <position position="132"/>
    </location>
</feature>
<feature type="binding site" evidence="1">
    <location>
        <begin position="41"/>
        <end position="45"/>
    </location>
    <ligand>
        <name>NAD(+)</name>
        <dbReference type="ChEBI" id="CHEBI:57540"/>
    </ligand>
</feature>
<feature type="binding site" evidence="1">
    <location>
        <begin position="90"/>
        <end position="91"/>
    </location>
    <ligand>
        <name>NAD(+)</name>
        <dbReference type="ChEBI" id="CHEBI:57540"/>
    </ligand>
</feature>
<feature type="binding site" evidence="1">
    <location>
        <position position="130"/>
    </location>
    <ligand>
        <name>NAD(+)</name>
        <dbReference type="ChEBI" id="CHEBI:57540"/>
    </ligand>
</feature>
<feature type="binding site" evidence="1">
    <location>
        <position position="153"/>
    </location>
    <ligand>
        <name>NAD(+)</name>
        <dbReference type="ChEBI" id="CHEBI:57540"/>
    </ligand>
</feature>
<feature type="binding site" evidence="1">
    <location>
        <position position="190"/>
    </location>
    <ligand>
        <name>NAD(+)</name>
        <dbReference type="ChEBI" id="CHEBI:57540"/>
    </ligand>
</feature>
<feature type="binding site" evidence="1">
    <location>
        <position position="307"/>
    </location>
    <ligand>
        <name>NAD(+)</name>
        <dbReference type="ChEBI" id="CHEBI:57540"/>
    </ligand>
</feature>
<feature type="binding site" evidence="1">
    <location>
        <position position="331"/>
    </location>
    <ligand>
        <name>NAD(+)</name>
        <dbReference type="ChEBI" id="CHEBI:57540"/>
    </ligand>
</feature>
<feature type="binding site" evidence="1">
    <location>
        <position position="425"/>
    </location>
    <ligand>
        <name>Zn(2+)</name>
        <dbReference type="ChEBI" id="CHEBI:29105"/>
    </ligand>
</feature>
<feature type="binding site" evidence="1">
    <location>
        <position position="428"/>
    </location>
    <ligand>
        <name>Zn(2+)</name>
        <dbReference type="ChEBI" id="CHEBI:29105"/>
    </ligand>
</feature>
<feature type="binding site" evidence="1">
    <location>
        <position position="443"/>
    </location>
    <ligand>
        <name>Zn(2+)</name>
        <dbReference type="ChEBI" id="CHEBI:29105"/>
    </ligand>
</feature>
<feature type="binding site" evidence="1">
    <location>
        <position position="449"/>
    </location>
    <ligand>
        <name>Zn(2+)</name>
        <dbReference type="ChEBI" id="CHEBI:29105"/>
    </ligand>
</feature>